<proteinExistence type="inferred from homology"/>
<feature type="chain" id="PRO_0000323252" description="Protein P">
    <location>
        <begin position="1"/>
        <end position="845"/>
    </location>
</feature>
<feature type="domain" description="Reverse transcriptase" evidence="1">
    <location>
        <begin position="359"/>
        <end position="602"/>
    </location>
</feature>
<feature type="region of interest" description="Terminal protein domain (TP)" evidence="1">
    <location>
        <begin position="1"/>
        <end position="179"/>
    </location>
</feature>
<feature type="region of interest" description="Spacer" evidence="1">
    <location>
        <begin position="180"/>
        <end position="348"/>
    </location>
</feature>
<feature type="region of interest" description="Disordered" evidence="2">
    <location>
        <begin position="226"/>
        <end position="245"/>
    </location>
</feature>
<feature type="region of interest" description="Polymerase/reverse transcriptase domain (RT)" evidence="1">
    <location>
        <begin position="349"/>
        <end position="692"/>
    </location>
</feature>
<feature type="binding site" evidence="1">
    <location>
        <position position="431"/>
    </location>
    <ligand>
        <name>Mg(2+)</name>
        <dbReference type="ChEBI" id="CHEBI:18420"/>
        <note>catalytic</note>
    </ligand>
</feature>
<feature type="binding site" evidence="1">
    <location>
        <position position="553"/>
    </location>
    <ligand>
        <name>Mg(2+)</name>
        <dbReference type="ChEBI" id="CHEBI:18420"/>
        <note>catalytic</note>
    </ligand>
</feature>
<feature type="binding site" evidence="1">
    <location>
        <position position="554"/>
    </location>
    <ligand>
        <name>Mg(2+)</name>
        <dbReference type="ChEBI" id="CHEBI:18420"/>
        <note>catalytic</note>
    </ligand>
</feature>
<feature type="site" description="Priming of reverse-transcription by covalently linking the first nucleotide of the (-)DNA" evidence="1">
    <location>
        <position position="65"/>
    </location>
</feature>
<keyword id="KW-0235">DNA replication</keyword>
<keyword id="KW-0238">DNA-binding</keyword>
<keyword id="KW-0239">DNA-directed DNA polymerase</keyword>
<keyword id="KW-0255">Endonuclease</keyword>
<keyword id="KW-0945">Host-virus interaction</keyword>
<keyword id="KW-0378">Hydrolase</keyword>
<keyword id="KW-1090">Inhibition of host innate immune response by virus</keyword>
<keyword id="KW-1113">Inhibition of host RLR pathway by virus</keyword>
<keyword id="KW-0460">Magnesium</keyword>
<keyword id="KW-0479">Metal-binding</keyword>
<keyword id="KW-0511">Multifunctional enzyme</keyword>
<keyword id="KW-0540">Nuclease</keyword>
<keyword id="KW-0548">Nucleotidyltransferase</keyword>
<keyword id="KW-0695">RNA-directed DNA polymerase</keyword>
<keyword id="KW-0808">Transferase</keyword>
<keyword id="KW-0899">Viral immunoevasion</keyword>
<organismHost>
    <name type="scientific">Homo sapiens</name>
    <name type="common">Human</name>
    <dbReference type="NCBI Taxonomy" id="9606"/>
</organismHost>
<organismHost>
    <name type="scientific">Pan troglodytes</name>
    <name type="common">Chimpanzee</name>
    <dbReference type="NCBI Taxonomy" id="9598"/>
</organismHost>
<dbReference type="EC" id="2.7.7.7" evidence="1"/>
<dbReference type="EC" id="2.7.7.49" evidence="1"/>
<dbReference type="EC" id="3.1.26.4" evidence="1"/>
<dbReference type="EMBL" id="AB014370">
    <property type="protein sequence ID" value="BAA32871.1"/>
    <property type="molecule type" value="Genomic_DNA"/>
</dbReference>
<dbReference type="Proteomes" id="UP000007910">
    <property type="component" value="Genome"/>
</dbReference>
<dbReference type="GO" id="GO:0003677">
    <property type="term" value="F:DNA binding"/>
    <property type="evidence" value="ECO:0007669"/>
    <property type="project" value="UniProtKB-UniRule"/>
</dbReference>
<dbReference type="GO" id="GO:0003887">
    <property type="term" value="F:DNA-directed DNA polymerase activity"/>
    <property type="evidence" value="ECO:0007669"/>
    <property type="project" value="UniProtKB-UniRule"/>
</dbReference>
<dbReference type="GO" id="GO:0046872">
    <property type="term" value="F:metal ion binding"/>
    <property type="evidence" value="ECO:0007669"/>
    <property type="project" value="UniProtKB-UniRule"/>
</dbReference>
<dbReference type="GO" id="GO:0003964">
    <property type="term" value="F:RNA-directed DNA polymerase activity"/>
    <property type="evidence" value="ECO:0007669"/>
    <property type="project" value="UniProtKB-UniRule"/>
</dbReference>
<dbReference type="GO" id="GO:0004523">
    <property type="term" value="F:RNA-DNA hybrid ribonuclease activity"/>
    <property type="evidence" value="ECO:0007669"/>
    <property type="project" value="UniProtKB-UniRule"/>
</dbReference>
<dbReference type="GO" id="GO:0006260">
    <property type="term" value="P:DNA replication"/>
    <property type="evidence" value="ECO:0007669"/>
    <property type="project" value="UniProtKB-UniRule"/>
</dbReference>
<dbReference type="GO" id="GO:0052170">
    <property type="term" value="P:symbiont-mediated suppression of host innate immune response"/>
    <property type="evidence" value="ECO:0007669"/>
    <property type="project" value="UniProtKB-UniRule"/>
</dbReference>
<dbReference type="FunFam" id="3.30.70.270:FF:000009">
    <property type="entry name" value="Protein P"/>
    <property type="match status" value="1"/>
</dbReference>
<dbReference type="Gene3D" id="3.30.70.270">
    <property type="match status" value="1"/>
</dbReference>
<dbReference type="HAMAP" id="MF_04073">
    <property type="entry name" value="HBV_DPOL"/>
    <property type="match status" value="1"/>
</dbReference>
<dbReference type="InterPro" id="IPR043502">
    <property type="entry name" value="DNA/RNA_pol_sf"/>
</dbReference>
<dbReference type="InterPro" id="IPR001462">
    <property type="entry name" value="DNApol_viral_C"/>
</dbReference>
<dbReference type="InterPro" id="IPR000201">
    <property type="entry name" value="DNApol_viral_N"/>
</dbReference>
<dbReference type="InterPro" id="IPR037531">
    <property type="entry name" value="HBV_DPOL"/>
</dbReference>
<dbReference type="InterPro" id="IPR043128">
    <property type="entry name" value="Rev_trsase/Diguanyl_cyclase"/>
</dbReference>
<dbReference type="InterPro" id="IPR000477">
    <property type="entry name" value="RT_dom"/>
</dbReference>
<dbReference type="InterPro" id="IPR051320">
    <property type="entry name" value="Viral_Replic_Matur_Polypro"/>
</dbReference>
<dbReference type="PANTHER" id="PTHR33064:SF29">
    <property type="entry name" value="PEPTIDASE A2 DOMAIN-CONTAINING PROTEIN-RELATED"/>
    <property type="match status" value="1"/>
</dbReference>
<dbReference type="PANTHER" id="PTHR33064">
    <property type="entry name" value="POL PROTEIN"/>
    <property type="match status" value="1"/>
</dbReference>
<dbReference type="Pfam" id="PF00336">
    <property type="entry name" value="DNA_pol_viral_C"/>
    <property type="match status" value="1"/>
</dbReference>
<dbReference type="Pfam" id="PF00242">
    <property type="entry name" value="DNA_pol_viral_N"/>
    <property type="match status" value="1"/>
</dbReference>
<dbReference type="Pfam" id="PF00078">
    <property type="entry name" value="RVT_1"/>
    <property type="match status" value="1"/>
</dbReference>
<dbReference type="SUPFAM" id="SSF56672">
    <property type="entry name" value="DNA/RNA polymerases"/>
    <property type="match status" value="1"/>
</dbReference>
<dbReference type="PROSITE" id="PS50878">
    <property type="entry name" value="RT_POL"/>
    <property type="match status" value="1"/>
</dbReference>
<reference key="1">
    <citation type="journal article" date="1998" name="Arch. Virol.">
        <title>Hepatitis B virus genomic sequence in the circulation of hepatocellular carcinoma patients: comparative analysis of 40 full-length isolates.</title>
        <authorList>
            <person name="Takahashi K."/>
            <person name="Akahane Y."/>
            <person name="Hino K."/>
            <person name="Ohta Y."/>
            <person name="Mishiro S."/>
        </authorList>
    </citation>
    <scope>NUCLEOTIDE SEQUENCE [GENOMIC DNA]</scope>
</reference>
<reference key="2">
    <citation type="journal article" date="2007" name="World J. Gastroenterol.">
        <title>Hepatitis B virus replication.</title>
        <authorList>
            <person name="Beck J."/>
            <person name="Nassal M."/>
        </authorList>
    </citation>
    <scope>REVIEW</scope>
</reference>
<protein>
    <recommendedName>
        <fullName evidence="1">Protein P</fullName>
    </recommendedName>
    <domain>
        <recommendedName>
            <fullName evidence="1">DNA-directed DNA polymerase</fullName>
            <ecNumber evidence="1">2.7.7.7</ecNumber>
        </recommendedName>
    </domain>
    <domain>
        <recommendedName>
            <fullName evidence="1">RNA-directed DNA polymerase</fullName>
            <ecNumber evidence="1">2.7.7.49</ecNumber>
        </recommendedName>
    </domain>
    <domain>
        <recommendedName>
            <fullName evidence="1">Ribonuclease H</fullName>
            <ecNumber evidence="1">3.1.26.4</ecNumber>
        </recommendedName>
    </domain>
</protein>
<comment type="function">
    <text evidence="1">Multifunctional enzyme that converts the viral RNA genome into dsDNA in viral cytoplasmic capsids. This enzyme displays a DNA polymerase activity that can copy either DNA or RNA templates, and a ribonuclease H (RNase H) activity that cleaves the RNA strand of RNA-DNA heteroduplexes in a partially processive 3'- to 5'-endonucleasic mode. Neo-synthesized pregenomic RNA (pgRNA) are encapsidated together with the P protein, and reverse-transcribed inside the nucleocapsid. Initiation of reverse-transcription occurs first by binding the epsilon loop on the pgRNA genome, and is initiated by protein priming, thereby the 5'-end of (-)DNA is covalently linked to P protein. Partial (+)DNA is synthesized from the (-)DNA template and generates the relaxed circular DNA (RC-DNA) genome. After budding and infection, the RC-DNA migrates in the nucleus, and is converted into a plasmid-like covalently closed circular DNA (cccDNA). The activity of P protein does not seem to be necessary for cccDNA generation, and is presumably released from (+)DNA by host nuclear DNA repair machinery.</text>
</comment>
<comment type="catalytic activity">
    <reaction evidence="1">
        <text>DNA(n) + a 2'-deoxyribonucleoside 5'-triphosphate = DNA(n+1) + diphosphate</text>
        <dbReference type="Rhea" id="RHEA:22508"/>
        <dbReference type="Rhea" id="RHEA-COMP:17339"/>
        <dbReference type="Rhea" id="RHEA-COMP:17340"/>
        <dbReference type="ChEBI" id="CHEBI:33019"/>
        <dbReference type="ChEBI" id="CHEBI:61560"/>
        <dbReference type="ChEBI" id="CHEBI:173112"/>
        <dbReference type="EC" id="2.7.7.7"/>
    </reaction>
</comment>
<comment type="catalytic activity">
    <reaction evidence="1">
        <text>DNA(n) + a 2'-deoxyribonucleoside 5'-triphosphate = DNA(n+1) + diphosphate</text>
        <dbReference type="Rhea" id="RHEA:22508"/>
        <dbReference type="Rhea" id="RHEA-COMP:17339"/>
        <dbReference type="Rhea" id="RHEA-COMP:17340"/>
        <dbReference type="ChEBI" id="CHEBI:33019"/>
        <dbReference type="ChEBI" id="CHEBI:61560"/>
        <dbReference type="ChEBI" id="CHEBI:173112"/>
        <dbReference type="EC" id="2.7.7.49"/>
    </reaction>
</comment>
<comment type="catalytic activity">
    <reaction evidence="1">
        <text>Endonucleolytic cleavage to 5'-phosphomonoester.</text>
        <dbReference type="EC" id="3.1.26.4"/>
    </reaction>
</comment>
<comment type="activity regulation">
    <text evidence="1">Activated by host HSP70 and HSP40 in vitro to be able to bind the epsilon loop of the pgRNA. Because deletion of the RNase H region renders the protein partly chaperone-independent, the chaperones may be needed indirectly to relieve occlusion of the RNA-binding site by this domain. Inhibited by several reverse-transcriptase inhibitors: Lamivudine, Adefovir and Entecavir.</text>
</comment>
<comment type="domain">
    <text evidence="1">Terminal protein domain (TP) is hepadnavirus-specific. Spacer domain is highly variable and separates the TP and RT domains. Polymerase/reverse-transcriptase domain (RT) and ribonuclease H domain (RH) are similar to retrovirus reverse transcriptase/RNase H.</text>
</comment>
<comment type="domain">
    <text evidence="1">The polymerase/reverse transcriptase (RT) and ribonuclease H (RH) domains are structured in five subdomains: finger, palm, thumb, connection and RNase H. Within the palm subdomain, the 'primer grip' region is thought to be involved in the positioning of the primer terminus for accommodating the incoming nucleotide. The RH domain stabilizes the association of RT with primer-template.</text>
</comment>
<comment type="miscellaneous">
    <text evidence="1">Hepadnaviral virions contain probably just one P protein molecule per particle.</text>
</comment>
<comment type="similarity">
    <text evidence="1">Belongs to the hepadnaviridae P protein family.</text>
</comment>
<sequence>MPLSYQHFRKLLLLDDGTEAGPLEEELPRLADADLNRRVAEDLNLGNLNVSIPWTHKVGNFTGLYSSTVPIFNPEWQTPSFPNIHLQEDIINRCQQFVGPLTVNEKRRLKLIMPARFYPTHTKYLPLDKGIKPYYPDQVVNHYFQTRHYLHTLWKAGILYKRETTRSASFCGSPYSWEQELQHGRLVIKTSQRHGDESFCSQPSGILSRSSVGPCIRSQLKQSRLGLQPHQGPLASSQPGRSGSIRARVHPSTRRYFGVEPSGSGHIDHSVNNSSSCLHQSAVRKAAYSHLSTSKRQSSSGHAVEFHCLPPNSAGSQSQGSVSSCWWLQFRNSKPCSEYCLSHLVNLREDWGPCDEHGEHHIRIPRTPARVTGGVFLVDKNPHNTAESRLVVDFSQFSRGITRVSWPKFAVPNLQSLTNLLSSNLSWLSLDVSAAFYHIPLHPAAMPHLLIGSSGLSRYVARLSSNSRINNNQYGTMQNLHDSCSRQLYVSLMLLYKTYGWKLHLYSHPIVLGFRKIPMGVGLSPFLLAQFTSAICSVVRRAFPHCLAFSYMDDVVLGAKSVQHREALYTAVTNFLLSLGIHLNPNKTKRWGYSLNFMGYIIGSWGTLPQDHIVQKIKHCFRKLPVNRPIDWKVCQRIVGLLGFAAPFTQCGYPALMPLYACIQAKQAFTFSPTYKAFLSKQYMNLYPVARQRPGLCQVFADATPTGWGLAIGHQRMRGTFVAPLPIHTAELLAACFARSRSGAKLIGTDNSVVLSRKYTSFPWLLGCAANWILRGTSFVYVPSALNPADDPSRGRLGLYRPLLRLPFQPTTGRTSLYAVSPSVPSHLPVRVHFASPLHVAWRPP</sequence>
<gene>
    <name evidence="1" type="primary">P</name>
</gene>
<organism>
    <name type="scientific">Hepatitis B virus genotype A2 (isolate Japan/11D11HCCW/1998)</name>
    <name type="common">HBV-A</name>
    <dbReference type="NCBI Taxonomy" id="489457"/>
    <lineage>
        <taxon>Viruses</taxon>
        <taxon>Riboviria</taxon>
        <taxon>Pararnavirae</taxon>
        <taxon>Artverviricota</taxon>
        <taxon>Revtraviricetes</taxon>
        <taxon>Blubervirales</taxon>
        <taxon>Hepadnaviridae</taxon>
        <taxon>Orthohepadnavirus</taxon>
        <taxon>Hepatitis B virus</taxon>
    </lineage>
</organism>
<accession>O91533</accession>
<evidence type="ECO:0000255" key="1">
    <source>
        <dbReference type="HAMAP-Rule" id="MF_04073"/>
    </source>
</evidence>
<evidence type="ECO:0000256" key="2">
    <source>
        <dbReference type="SAM" id="MobiDB-lite"/>
    </source>
</evidence>
<name>DPOL_HBVA7</name>